<protein>
    <recommendedName>
        <fullName evidence="1">Nucleoside triphosphate pyrophosphatase</fullName>
        <ecNumber evidence="1">3.6.1.9</ecNumber>
    </recommendedName>
    <alternativeName>
        <fullName evidence="1">Nucleotide pyrophosphatase</fullName>
        <shortName evidence="1">Nucleotide PPase</shortName>
    </alternativeName>
</protein>
<keyword id="KW-0963">Cytoplasm</keyword>
<keyword id="KW-0378">Hydrolase</keyword>
<keyword id="KW-0546">Nucleotide metabolism</keyword>
<keyword id="KW-1185">Reference proteome</keyword>
<name>NTPP_SYNY3</name>
<proteinExistence type="inferred from homology"/>
<organism>
    <name type="scientific">Synechocystis sp. (strain ATCC 27184 / PCC 6803 / Kazusa)</name>
    <dbReference type="NCBI Taxonomy" id="1111708"/>
    <lineage>
        <taxon>Bacteria</taxon>
        <taxon>Bacillati</taxon>
        <taxon>Cyanobacteriota</taxon>
        <taxon>Cyanophyceae</taxon>
        <taxon>Synechococcales</taxon>
        <taxon>Merismopediaceae</taxon>
        <taxon>Synechocystis</taxon>
    </lineage>
</organism>
<feature type="chain" id="PRO_0000123065" description="Nucleoside triphosphate pyrophosphatase">
    <location>
        <begin position="1"/>
        <end position="195"/>
    </location>
</feature>
<feature type="active site" description="Proton acceptor" evidence="1">
    <location>
        <position position="70"/>
    </location>
</feature>
<comment type="function">
    <text evidence="1">Nucleoside triphosphate pyrophosphatase. May have a dual role in cell division arrest and in preventing the incorporation of modified nucleotides into cellular nucleic acids.</text>
</comment>
<comment type="catalytic activity">
    <reaction evidence="1">
        <text>a ribonucleoside 5'-triphosphate + H2O = a ribonucleoside 5'-phosphate + diphosphate + H(+)</text>
        <dbReference type="Rhea" id="RHEA:23996"/>
        <dbReference type="ChEBI" id="CHEBI:15377"/>
        <dbReference type="ChEBI" id="CHEBI:15378"/>
        <dbReference type="ChEBI" id="CHEBI:33019"/>
        <dbReference type="ChEBI" id="CHEBI:58043"/>
        <dbReference type="ChEBI" id="CHEBI:61557"/>
        <dbReference type="EC" id="3.6.1.9"/>
    </reaction>
</comment>
<comment type="catalytic activity">
    <reaction evidence="1">
        <text>a 2'-deoxyribonucleoside 5'-triphosphate + H2O = a 2'-deoxyribonucleoside 5'-phosphate + diphosphate + H(+)</text>
        <dbReference type="Rhea" id="RHEA:44644"/>
        <dbReference type="ChEBI" id="CHEBI:15377"/>
        <dbReference type="ChEBI" id="CHEBI:15378"/>
        <dbReference type="ChEBI" id="CHEBI:33019"/>
        <dbReference type="ChEBI" id="CHEBI:61560"/>
        <dbReference type="ChEBI" id="CHEBI:65317"/>
        <dbReference type="EC" id="3.6.1.9"/>
    </reaction>
</comment>
<comment type="cofactor">
    <cofactor evidence="1">
        <name>a divalent metal cation</name>
        <dbReference type="ChEBI" id="CHEBI:60240"/>
    </cofactor>
</comment>
<comment type="subcellular location">
    <subcellularLocation>
        <location evidence="1">Cytoplasm</location>
    </subcellularLocation>
</comment>
<comment type="similarity">
    <text evidence="1">Belongs to the Maf family.</text>
</comment>
<accession>P74331</accession>
<dbReference type="EC" id="3.6.1.9" evidence="1"/>
<dbReference type="EMBL" id="BA000022">
    <property type="protein sequence ID" value="BAA18425.1"/>
    <property type="molecule type" value="Genomic_DNA"/>
</dbReference>
<dbReference type="PIR" id="S76166">
    <property type="entry name" value="S76166"/>
</dbReference>
<dbReference type="SMR" id="P74331"/>
<dbReference type="FunCoup" id="P74331">
    <property type="interactions" value="380"/>
</dbReference>
<dbReference type="IntAct" id="P74331">
    <property type="interactions" value="1"/>
</dbReference>
<dbReference type="STRING" id="1148.gene:10499301"/>
<dbReference type="PaxDb" id="1148-1653512"/>
<dbReference type="EnsemblBacteria" id="BAA18425">
    <property type="protein sequence ID" value="BAA18425"/>
    <property type="gene ID" value="BAA18425"/>
</dbReference>
<dbReference type="KEGG" id="syn:sll0905"/>
<dbReference type="eggNOG" id="COG0424">
    <property type="taxonomic scope" value="Bacteria"/>
</dbReference>
<dbReference type="InParanoid" id="P74331"/>
<dbReference type="PhylomeDB" id="P74331"/>
<dbReference type="Proteomes" id="UP000001425">
    <property type="component" value="Chromosome"/>
</dbReference>
<dbReference type="GO" id="GO:0005737">
    <property type="term" value="C:cytoplasm"/>
    <property type="evidence" value="ECO:0007669"/>
    <property type="project" value="UniProtKB-SubCell"/>
</dbReference>
<dbReference type="GO" id="GO:0047429">
    <property type="term" value="F:nucleoside triphosphate diphosphatase activity"/>
    <property type="evidence" value="ECO:0000318"/>
    <property type="project" value="GO_Central"/>
</dbReference>
<dbReference type="GO" id="GO:0009117">
    <property type="term" value="P:nucleotide metabolic process"/>
    <property type="evidence" value="ECO:0007669"/>
    <property type="project" value="UniProtKB-KW"/>
</dbReference>
<dbReference type="CDD" id="cd00555">
    <property type="entry name" value="Maf"/>
    <property type="match status" value="1"/>
</dbReference>
<dbReference type="FunFam" id="3.90.950.10:FF:000010">
    <property type="entry name" value="Nucleoside triphosphate pyrophosphatase"/>
    <property type="match status" value="1"/>
</dbReference>
<dbReference type="Gene3D" id="3.90.950.10">
    <property type="match status" value="1"/>
</dbReference>
<dbReference type="HAMAP" id="MF_00528">
    <property type="entry name" value="Maf"/>
    <property type="match status" value="1"/>
</dbReference>
<dbReference type="InterPro" id="IPR029001">
    <property type="entry name" value="ITPase-like_fam"/>
</dbReference>
<dbReference type="InterPro" id="IPR003697">
    <property type="entry name" value="Maf-like"/>
</dbReference>
<dbReference type="NCBIfam" id="TIGR00172">
    <property type="entry name" value="maf"/>
    <property type="match status" value="1"/>
</dbReference>
<dbReference type="PANTHER" id="PTHR43213">
    <property type="entry name" value="BIFUNCTIONAL DTTP/UTP PYROPHOSPHATASE/METHYLTRANSFERASE PROTEIN-RELATED"/>
    <property type="match status" value="1"/>
</dbReference>
<dbReference type="PANTHER" id="PTHR43213:SF5">
    <property type="entry name" value="BIFUNCTIONAL DTTP_UTP PYROPHOSPHATASE_METHYLTRANSFERASE PROTEIN-RELATED"/>
    <property type="match status" value="1"/>
</dbReference>
<dbReference type="Pfam" id="PF02545">
    <property type="entry name" value="Maf"/>
    <property type="match status" value="1"/>
</dbReference>
<dbReference type="PIRSF" id="PIRSF006305">
    <property type="entry name" value="Maf"/>
    <property type="match status" value="1"/>
</dbReference>
<dbReference type="SUPFAM" id="SSF52972">
    <property type="entry name" value="ITPase-like"/>
    <property type="match status" value="1"/>
</dbReference>
<gene>
    <name type="ordered locus">sll0905</name>
</gene>
<sequence>MPPTFVLASASPARKRLLEMAGISPLVAVSHFDESSLAADNTVALVEALAKAKAGTVASKFADALVLGCDSLLLVNGQTYGKPESPAVAIARWQTMRGQVGELYTGHALIDRTQNRCLCQTGLTKVHFADVDDDTIQAYVGSGEPLQCAGAFALEGKGGMLINKLDGCSSNVIGLSLPILRSLLQRLGYSLKDFW</sequence>
<reference key="1">
    <citation type="journal article" date="1996" name="DNA Res.">
        <title>Sequence analysis of the genome of the unicellular cyanobacterium Synechocystis sp. strain PCC6803. II. Sequence determination of the entire genome and assignment of potential protein-coding regions.</title>
        <authorList>
            <person name="Kaneko T."/>
            <person name="Sato S."/>
            <person name="Kotani H."/>
            <person name="Tanaka A."/>
            <person name="Asamizu E."/>
            <person name="Nakamura Y."/>
            <person name="Miyajima N."/>
            <person name="Hirosawa M."/>
            <person name="Sugiura M."/>
            <person name="Sasamoto S."/>
            <person name="Kimura T."/>
            <person name="Hosouchi T."/>
            <person name="Matsuno A."/>
            <person name="Muraki A."/>
            <person name="Nakazaki N."/>
            <person name="Naruo K."/>
            <person name="Okumura S."/>
            <person name="Shimpo S."/>
            <person name="Takeuchi C."/>
            <person name="Wada T."/>
            <person name="Watanabe A."/>
            <person name="Yamada M."/>
            <person name="Yasuda M."/>
            <person name="Tabata S."/>
        </authorList>
    </citation>
    <scope>NUCLEOTIDE SEQUENCE [LARGE SCALE GENOMIC DNA]</scope>
    <source>
        <strain>ATCC 27184 / PCC 6803 / Kazusa</strain>
    </source>
</reference>
<evidence type="ECO:0000255" key="1">
    <source>
        <dbReference type="HAMAP-Rule" id="MF_00528"/>
    </source>
</evidence>